<reference key="1">
    <citation type="journal article" date="1990" name="Curr. Top. Microbiol. Immunol.">
        <title>Analysis of the protein-coding content of the sequence of human cytomegalovirus strain AD169.</title>
        <authorList>
            <person name="Chee M.S."/>
            <person name="Bankier A.T."/>
            <person name="Beck S."/>
            <person name="Bohni R."/>
            <person name="Brown C.M."/>
            <person name="Cerny R."/>
            <person name="Horsnell T."/>
            <person name="Hutchison C.A. III"/>
            <person name="Kouzarides T."/>
            <person name="Martignetti J.A."/>
            <person name="Preddie E."/>
            <person name="Satchwell S.C."/>
            <person name="Tomlinson P."/>
            <person name="Weston K.M."/>
            <person name="Barrell B.G."/>
        </authorList>
    </citation>
    <scope>NUCLEOTIDE SEQUENCE [LARGE SCALE GENOMIC DNA]</scope>
</reference>
<reference key="2">
    <citation type="journal article" date="2002" name="J. Virol.">
        <title>Identification and expression of human cytomegalovirus transcription units coding for two distinct Fcgamma receptor homologs.</title>
        <authorList>
            <person name="Atalay R."/>
            <person name="Zimmermann A."/>
            <person name="Wagner M."/>
            <person name="Borst E."/>
            <person name="Benz C."/>
            <person name="Messerle M."/>
            <person name="Hengel H."/>
        </authorList>
    </citation>
    <scope>NUCLEOTIDE SEQUENCE</scope>
    <scope>IDENTIFICATION</scope>
</reference>
<reference key="3">
    <citation type="journal article" date="2003" name="J. Gen. Virol.">
        <title>The human cytomegalovirus genome revisited: comparison with the chimpanzee cytomegalovirus genome.</title>
        <authorList>
            <person name="Davison A.J."/>
            <person name="Dolan A."/>
            <person name="Akter P."/>
            <person name="Addison C."/>
            <person name="Dargan D.J."/>
            <person name="Alcendor D.J."/>
            <person name="McGeoch D.J."/>
            <person name="Hayward G.S."/>
        </authorList>
    </citation>
    <scope>GENOME REANNOTATION</scope>
</reference>
<reference key="4">
    <citation type="journal article" date="2003" name="J. Gen. Virol.">
        <authorList>
            <person name="Davison A.J."/>
            <person name="Dolan A."/>
            <person name="Akter P."/>
            <person name="Addison C."/>
            <person name="Dargan D.J."/>
            <person name="Alcendor D.J."/>
            <person name="McGeoch D.J."/>
            <person name="Hayward G.S."/>
        </authorList>
    </citation>
    <scope>ERRATUM OF PUBMED:12533697</scope>
</reference>
<reference key="5">
    <citation type="journal article" date="2004" name="J. Virol.">
        <title>Identification of proteins in human cytomegalovirus (HCMV) particles: the HCMV proteome.</title>
        <authorList>
            <person name="Varnum S.M."/>
            <person name="Streblow D.N."/>
            <person name="Monroe M.E."/>
            <person name="Smith P."/>
            <person name="Auberry K.J."/>
            <person name="Pasa-Tolic L."/>
            <person name="Wang D."/>
            <person name="Camp D.G. II"/>
            <person name="Rodland K."/>
            <person name="Wiley S."/>
            <person name="Britt W."/>
            <person name="Shenk T."/>
            <person name="Smith R.D."/>
            <person name="Nelson J.A."/>
        </authorList>
    </citation>
    <scope>IDENTIFICATION</scope>
</reference>
<reference key="6">
    <citation type="journal article" date="2004" name="J. Virol.">
        <authorList>
            <person name="Varnum S.M."/>
            <person name="Streblow D.N."/>
            <person name="Monroe M.E."/>
            <person name="Smith P."/>
            <person name="Auberry K.J."/>
            <person name="Pasa-Tolic L."/>
            <person name="Wang D."/>
            <person name="Camp D.G. II"/>
            <person name="Rodland K."/>
            <person name="Wiley S."/>
            <person name="Britt W."/>
            <person name="Shenk T."/>
            <person name="Smith R.D."/>
            <person name="Nelson J.A."/>
        </authorList>
    </citation>
    <scope>ERRATUM OF PUBMED:15452216</scope>
</reference>
<reference key="7">
    <citation type="journal article" date="2008" name="J. Virol.">
        <title>The human cytomegalovirus Fc receptor gp68 binds the Fc CH2-CH3 interface of immunoglobulin G.</title>
        <authorList>
            <person name="Sprague E.R."/>
            <person name="Reinhard H."/>
            <person name="Cheung E.J."/>
            <person name="Farley A.H."/>
            <person name="Trujillo R.D."/>
            <person name="Hengel H."/>
            <person name="Bjorkman P.J."/>
        </authorList>
    </citation>
    <scope>FUNCTION</scope>
</reference>
<feature type="signal peptide" evidence="1">
    <location>
        <begin position="1"/>
        <end position="23"/>
    </location>
</feature>
<feature type="chain" id="PRO_0000037457" description="Viral Fc-gamma receptor-like protein UL119">
    <location>
        <begin position="24"/>
        <end position="345"/>
    </location>
</feature>
<feature type="topological domain" description="Virion surface" evidence="1">
    <location>
        <begin position="24"/>
        <end position="294"/>
    </location>
</feature>
<feature type="transmembrane region" description="Helical" evidence="1">
    <location>
        <begin position="295"/>
        <end position="317"/>
    </location>
</feature>
<feature type="topological domain" description="Intravirion" evidence="1">
    <location>
        <begin position="318"/>
        <end position="345"/>
    </location>
</feature>
<feature type="domain" description="Ig-like V-type">
    <location>
        <begin position="91"/>
        <end position="190"/>
    </location>
</feature>
<feature type="region of interest" description="Disordered" evidence="2">
    <location>
        <begin position="23"/>
        <end position="42"/>
    </location>
</feature>
<feature type="glycosylation site" description="N-linked (GlcNAc...) asparagine; by host" evidence="1">
    <location>
        <position position="34"/>
    </location>
</feature>
<feature type="glycosylation site" description="N-linked (GlcNAc...) asparagine; by host" evidence="1">
    <location>
        <position position="48"/>
    </location>
</feature>
<feature type="glycosylation site" description="N-linked (GlcNAc...) asparagine; by host" evidence="1">
    <location>
        <position position="95"/>
    </location>
</feature>
<feature type="glycosylation site" description="N-linked (GlcNAc...) asparagine; by host" evidence="1">
    <location>
        <position position="104"/>
    </location>
</feature>
<feature type="glycosylation site" description="N-linked (GlcNAc...) asparagine; by host" evidence="1">
    <location>
        <position position="148"/>
    </location>
</feature>
<feature type="glycosylation site" description="N-linked (GlcNAc...) asparagine; by host" evidence="1">
    <location>
        <position position="179"/>
    </location>
</feature>
<feature type="glycosylation site" description="N-linked (GlcNAc...) asparagine; by host" evidence="1">
    <location>
        <position position="198"/>
    </location>
</feature>
<feature type="glycosylation site" description="N-linked (GlcNAc...) asparagine; by host" evidence="1">
    <location>
        <position position="217"/>
    </location>
</feature>
<feature type="glycosylation site" description="N-linked (GlcNAc...) asparagine; by host" evidence="1">
    <location>
        <position position="225"/>
    </location>
</feature>
<feature type="glycosylation site" description="N-linked (GlcNAc...) asparagine; by host" evidence="1">
    <location>
        <position position="241"/>
    </location>
</feature>
<feature type="glycosylation site" description="N-linked (GlcNAc...) asparagine; by host" evidence="1">
    <location>
        <position position="244"/>
    </location>
</feature>
<feature type="glycosylation site" description="N-linked (GlcNAc...) asparagine; by host" evidence="1">
    <location>
        <position position="260"/>
    </location>
</feature>
<name>UL119_HCMVA</name>
<accession>P16739</accession>
<accession>P16834</accession>
<accession>Q8QP99</accession>
<organism>
    <name type="scientific">Human cytomegalovirus (strain AD169)</name>
    <name type="common">HHV-5</name>
    <name type="synonym">Human herpesvirus 5</name>
    <dbReference type="NCBI Taxonomy" id="10360"/>
    <lineage>
        <taxon>Viruses</taxon>
        <taxon>Duplodnaviria</taxon>
        <taxon>Heunggongvirae</taxon>
        <taxon>Peploviricota</taxon>
        <taxon>Herviviricetes</taxon>
        <taxon>Herpesvirales</taxon>
        <taxon>Orthoherpesviridae</taxon>
        <taxon>Betaherpesvirinae</taxon>
        <taxon>Cytomegalovirus</taxon>
        <taxon>Cytomegalovirus humanbeta5</taxon>
        <taxon>Human cytomegalovirus</taxon>
    </lineage>
</organism>
<evidence type="ECO:0000255" key="1"/>
<evidence type="ECO:0000256" key="2">
    <source>
        <dbReference type="SAM" id="MobiDB-lite"/>
    </source>
</evidence>
<evidence type="ECO:0000269" key="3">
    <source>
    </source>
</evidence>
<evidence type="ECO:0000305" key="4"/>
<gene>
    <name type="primary">UL119/UL118</name>
</gene>
<organismHost>
    <name type="scientific">Homo sapiens</name>
    <name type="common">Human</name>
    <dbReference type="NCBI Taxonomy" id="9606"/>
</organismHost>
<sequence>MCSVLAIALVVALLGDMHPGVKSSTTSAVTSPSNTTVTSTTSISTSNNVTSAVTTTVQTSTSSASTSVIATTQKEGHLYTVNCEASYSHDQVSLNATCKVILLNNTKNPDILSVTCYARTDCKGPFTQVGYLSAFPPDNEGKLHLSYNATAQELLISGLRPQETTEYTCSFFSWGRHHNATWDLFTYPIYAVYGTRLNATTMRVRVLLQEHEHCLLNGSSLYHPNSTVHLHQGNQLIPPWNISNVTYNGQRLREFVFYLNGTYTVVRLHVQIAGRSFTTTYVFIKSDPLFEDRLLAYGVLAFLVFMVIILLYVTYMLARRRDWSYKRLEEPVEEKKHPVPYFKQW</sequence>
<proteinExistence type="evidence at transcript level"/>
<keyword id="KW-0325">Glycoprotein</keyword>
<keyword id="KW-0945">Host-virus interaction</keyword>
<keyword id="KW-0393">Immunoglobulin domain</keyword>
<keyword id="KW-0472">Membrane</keyword>
<keyword id="KW-1124">Modulation of host immunity by viral IgG Fc receptor-like protein</keyword>
<keyword id="KW-1185">Reference proteome</keyword>
<keyword id="KW-0732">Signal</keyword>
<keyword id="KW-0812">Transmembrane</keyword>
<keyword id="KW-1133">Transmembrane helix</keyword>
<keyword id="KW-0899">Viral immunoevasion</keyword>
<keyword id="KW-0946">Virion</keyword>
<comment type="function">
    <text evidence="3">Serves as a receptor for the Fc part of human IgG. May thus be involved in interfering with host Ig-mediated immune responses.</text>
</comment>
<comment type="subcellular location">
    <subcellularLocation>
        <location evidence="4">Virion membrane</location>
        <topology evidence="4">Single-pass type I membrane protein</topology>
    </subcellularLocation>
</comment>
<comment type="sequence caution" evidence="4">
    <conflict type="erroneous gene model prediction">
        <sequence resource="EMBL-CDS" id="CAA35320"/>
    </conflict>
</comment>
<comment type="sequence caution" evidence="4">
    <conflict type="erroneous gene model prediction">
        <sequence resource="EMBL-CDS" id="CAA35321"/>
    </conflict>
</comment>
<protein>
    <recommendedName>
        <fullName>Viral Fc-gamma receptor-like protein UL119</fullName>
    </recommendedName>
    <alternativeName>
        <fullName>gp68</fullName>
    </alternativeName>
</protein>
<dbReference type="EMBL" id="X17403">
    <property type="protein sequence ID" value="CAA35320.1"/>
    <property type="status" value="ALT_SEQ"/>
    <property type="molecule type" value="Genomic_DNA"/>
</dbReference>
<dbReference type="EMBL" id="X17403">
    <property type="protein sequence ID" value="CAA35321.1"/>
    <property type="status" value="ALT_SEQ"/>
    <property type="molecule type" value="Genomic_DNA"/>
</dbReference>
<dbReference type="EMBL" id="AY065993">
    <property type="protein sequence ID" value="AAL49993.1"/>
    <property type="molecule type" value="mRNA"/>
</dbReference>
<dbReference type="EMBL" id="BK000394">
    <property type="protein sequence ID" value="DAA00108.1"/>
    <property type="molecule type" value="Genomic_DNA"/>
</dbReference>
<dbReference type="PIR" id="S09885">
    <property type="entry name" value="S09885"/>
</dbReference>
<dbReference type="PIR" id="S09886">
    <property type="entry name" value="S09886"/>
</dbReference>
<dbReference type="GlyCosmos" id="P16739">
    <property type="glycosylation" value="12 sites, No reported glycans"/>
</dbReference>
<dbReference type="Proteomes" id="UP000008991">
    <property type="component" value="Segment"/>
</dbReference>
<dbReference type="Proteomes" id="UP000008992">
    <property type="component" value="Segment"/>
</dbReference>
<dbReference type="GO" id="GO:0016020">
    <property type="term" value="C:membrane"/>
    <property type="evidence" value="ECO:0007669"/>
    <property type="project" value="UniProtKB-KW"/>
</dbReference>
<dbReference type="GO" id="GO:0055036">
    <property type="term" value="C:virion membrane"/>
    <property type="evidence" value="ECO:0007669"/>
    <property type="project" value="UniProtKB-SubCell"/>
</dbReference>